<evidence type="ECO:0000255" key="1">
    <source>
        <dbReference type="HAMAP-Rule" id="MF_01309"/>
    </source>
</evidence>
<evidence type="ECO:0000305" key="2"/>
<protein>
    <recommendedName>
        <fullName evidence="1">Small ribosomal subunit protein uS3</fullName>
    </recommendedName>
    <alternativeName>
        <fullName evidence="2">30S ribosomal protein S3</fullName>
    </alternativeName>
</protein>
<name>RS3_NITSB</name>
<organism>
    <name type="scientific">Nitratiruptor sp. (strain SB155-2)</name>
    <dbReference type="NCBI Taxonomy" id="387092"/>
    <lineage>
        <taxon>Bacteria</taxon>
        <taxon>Pseudomonadati</taxon>
        <taxon>Campylobacterota</taxon>
        <taxon>Epsilonproteobacteria</taxon>
        <taxon>Nautiliales</taxon>
        <taxon>Nitratiruptoraceae</taxon>
        <taxon>Nitratiruptor</taxon>
    </lineage>
</organism>
<comment type="function">
    <text evidence="1">Binds the lower part of the 30S subunit head. Binds mRNA in the 70S ribosome, positioning it for translation.</text>
</comment>
<comment type="subunit">
    <text evidence="1">Part of the 30S ribosomal subunit. Forms a tight complex with proteins S10 and S14.</text>
</comment>
<comment type="similarity">
    <text evidence="1">Belongs to the universal ribosomal protein uS3 family.</text>
</comment>
<gene>
    <name evidence="1" type="primary">rpsC</name>
    <name type="ordered locus">NIS_0229</name>
</gene>
<keyword id="KW-1185">Reference proteome</keyword>
<keyword id="KW-0687">Ribonucleoprotein</keyword>
<keyword id="KW-0689">Ribosomal protein</keyword>
<keyword id="KW-0694">RNA-binding</keyword>
<keyword id="KW-0699">rRNA-binding</keyword>
<dbReference type="EMBL" id="AP009178">
    <property type="protein sequence ID" value="BAF69343.1"/>
    <property type="molecule type" value="Genomic_DNA"/>
</dbReference>
<dbReference type="RefSeq" id="WP_012081606.1">
    <property type="nucleotide sequence ID" value="NC_009662.1"/>
</dbReference>
<dbReference type="SMR" id="A6Q1I4"/>
<dbReference type="FunCoup" id="A6Q1I4">
    <property type="interactions" value="560"/>
</dbReference>
<dbReference type="STRING" id="387092.NIS_0229"/>
<dbReference type="KEGG" id="nis:NIS_0229"/>
<dbReference type="eggNOG" id="COG0092">
    <property type="taxonomic scope" value="Bacteria"/>
</dbReference>
<dbReference type="HOGENOM" id="CLU_058591_0_2_7"/>
<dbReference type="InParanoid" id="A6Q1I4"/>
<dbReference type="OrthoDB" id="9806396at2"/>
<dbReference type="Proteomes" id="UP000001118">
    <property type="component" value="Chromosome"/>
</dbReference>
<dbReference type="GO" id="GO:0022627">
    <property type="term" value="C:cytosolic small ribosomal subunit"/>
    <property type="evidence" value="ECO:0007669"/>
    <property type="project" value="TreeGrafter"/>
</dbReference>
<dbReference type="GO" id="GO:0003729">
    <property type="term" value="F:mRNA binding"/>
    <property type="evidence" value="ECO:0007669"/>
    <property type="project" value="UniProtKB-UniRule"/>
</dbReference>
<dbReference type="GO" id="GO:0019843">
    <property type="term" value="F:rRNA binding"/>
    <property type="evidence" value="ECO:0007669"/>
    <property type="project" value="UniProtKB-UniRule"/>
</dbReference>
<dbReference type="GO" id="GO:0003735">
    <property type="term" value="F:structural constituent of ribosome"/>
    <property type="evidence" value="ECO:0007669"/>
    <property type="project" value="InterPro"/>
</dbReference>
<dbReference type="GO" id="GO:0006412">
    <property type="term" value="P:translation"/>
    <property type="evidence" value="ECO:0007669"/>
    <property type="project" value="UniProtKB-UniRule"/>
</dbReference>
<dbReference type="CDD" id="cd02412">
    <property type="entry name" value="KH-II_30S_S3"/>
    <property type="match status" value="1"/>
</dbReference>
<dbReference type="FunFam" id="3.30.1140.32:FF:000006">
    <property type="entry name" value="30S ribosomal protein S3"/>
    <property type="match status" value="1"/>
</dbReference>
<dbReference type="FunFam" id="3.30.300.20:FF:000001">
    <property type="entry name" value="30S ribosomal protein S3"/>
    <property type="match status" value="1"/>
</dbReference>
<dbReference type="Gene3D" id="3.30.300.20">
    <property type="match status" value="1"/>
</dbReference>
<dbReference type="Gene3D" id="3.30.1140.32">
    <property type="entry name" value="Ribosomal protein S3, C-terminal domain"/>
    <property type="match status" value="1"/>
</dbReference>
<dbReference type="HAMAP" id="MF_01309_B">
    <property type="entry name" value="Ribosomal_uS3_B"/>
    <property type="match status" value="1"/>
</dbReference>
<dbReference type="InterPro" id="IPR004087">
    <property type="entry name" value="KH_dom"/>
</dbReference>
<dbReference type="InterPro" id="IPR015946">
    <property type="entry name" value="KH_dom-like_a/b"/>
</dbReference>
<dbReference type="InterPro" id="IPR004044">
    <property type="entry name" value="KH_dom_type_2"/>
</dbReference>
<dbReference type="InterPro" id="IPR009019">
    <property type="entry name" value="KH_sf_prok-type"/>
</dbReference>
<dbReference type="InterPro" id="IPR036419">
    <property type="entry name" value="Ribosomal_S3_C_sf"/>
</dbReference>
<dbReference type="InterPro" id="IPR005704">
    <property type="entry name" value="Ribosomal_uS3_bac-typ"/>
</dbReference>
<dbReference type="InterPro" id="IPR001351">
    <property type="entry name" value="Ribosomal_uS3_C"/>
</dbReference>
<dbReference type="InterPro" id="IPR018280">
    <property type="entry name" value="Ribosomal_uS3_CS"/>
</dbReference>
<dbReference type="NCBIfam" id="TIGR01009">
    <property type="entry name" value="rpsC_bact"/>
    <property type="match status" value="1"/>
</dbReference>
<dbReference type="PANTHER" id="PTHR11760">
    <property type="entry name" value="30S/40S RIBOSOMAL PROTEIN S3"/>
    <property type="match status" value="1"/>
</dbReference>
<dbReference type="PANTHER" id="PTHR11760:SF19">
    <property type="entry name" value="SMALL RIBOSOMAL SUBUNIT PROTEIN US3C"/>
    <property type="match status" value="1"/>
</dbReference>
<dbReference type="Pfam" id="PF07650">
    <property type="entry name" value="KH_2"/>
    <property type="match status" value="1"/>
</dbReference>
<dbReference type="Pfam" id="PF00189">
    <property type="entry name" value="Ribosomal_S3_C"/>
    <property type="match status" value="1"/>
</dbReference>
<dbReference type="SMART" id="SM00322">
    <property type="entry name" value="KH"/>
    <property type="match status" value="1"/>
</dbReference>
<dbReference type="SUPFAM" id="SSF54814">
    <property type="entry name" value="Prokaryotic type KH domain (KH-domain type II)"/>
    <property type="match status" value="1"/>
</dbReference>
<dbReference type="SUPFAM" id="SSF54821">
    <property type="entry name" value="Ribosomal protein S3 C-terminal domain"/>
    <property type="match status" value="1"/>
</dbReference>
<dbReference type="PROSITE" id="PS50823">
    <property type="entry name" value="KH_TYPE_2"/>
    <property type="match status" value="1"/>
</dbReference>
<dbReference type="PROSITE" id="PS00548">
    <property type="entry name" value="RIBOSOMAL_S3"/>
    <property type="match status" value="1"/>
</dbReference>
<feature type="chain" id="PRO_1000086138" description="Small ribosomal subunit protein uS3">
    <location>
        <begin position="1"/>
        <end position="229"/>
    </location>
</feature>
<feature type="domain" description="KH type-2" evidence="1">
    <location>
        <begin position="39"/>
        <end position="107"/>
    </location>
</feature>
<accession>A6Q1I4</accession>
<reference key="1">
    <citation type="journal article" date="2007" name="Proc. Natl. Acad. Sci. U.S.A.">
        <title>Deep-sea vent epsilon-proteobacterial genomes provide insights into emergence of pathogens.</title>
        <authorList>
            <person name="Nakagawa S."/>
            <person name="Takaki Y."/>
            <person name="Shimamura S."/>
            <person name="Reysenbach A.-L."/>
            <person name="Takai K."/>
            <person name="Horikoshi K."/>
        </authorList>
    </citation>
    <scope>NUCLEOTIDE SEQUENCE [LARGE SCALE GENOMIC DNA]</scope>
    <source>
        <strain>SB155-2</strain>
    </source>
</reference>
<sequence length="229" mass="26175">MGQKVNPIGLRLGINRNWESRWFPDFNKMPERVEEDNKIRKFLKKELYYAGISNIIIERTAKKLRVTIVAARPGIIIGKKGADIEKLKQKLQKLVGKEVFINIKEEKRPQASAQLAAENVATQLERRVAFRRAMKKVIQAAQKAGVKGIKVQVAGRLGGAEMARTEWYLEGRVPLHTLRAKIDYGFAEAHTTYGVIGVKVWIFKGEVLQKGIRPEPTERPRRRAPRRRS</sequence>
<proteinExistence type="inferred from homology"/>